<reference key="1">
    <citation type="submission" date="2006-03" db="EMBL/GenBank/DDBJ databases">
        <title>Complete sequence of chromosome of Psychrobacter cryohalolentis K5.</title>
        <authorList>
            <consortium name="US DOE Joint Genome Institute"/>
            <person name="Copeland A."/>
            <person name="Lucas S."/>
            <person name="Lapidus A."/>
            <person name="Barry K."/>
            <person name="Detter J.C."/>
            <person name="Glavina T."/>
            <person name="Hammon N."/>
            <person name="Israni S."/>
            <person name="Dalin E."/>
            <person name="Tice H."/>
            <person name="Pitluck S."/>
            <person name="Brettin T."/>
            <person name="Bruce D."/>
            <person name="Han C."/>
            <person name="Tapia R."/>
            <person name="Sims D.R."/>
            <person name="Gilna P."/>
            <person name="Schmutz J."/>
            <person name="Larimer F."/>
            <person name="Land M."/>
            <person name="Hauser L."/>
            <person name="Kyrpides N."/>
            <person name="Kim E."/>
            <person name="Richardson P."/>
        </authorList>
    </citation>
    <scope>NUCLEOTIDE SEQUENCE [LARGE SCALE GENOMIC DNA]</scope>
    <source>
        <strain>ATCC BAA-1226 / DSM 17306 / VKM B-2378 / K5</strain>
    </source>
</reference>
<accession>Q1QDA4</accession>
<keyword id="KW-0030">Aminoacyl-tRNA synthetase</keyword>
<keyword id="KW-0067">ATP-binding</keyword>
<keyword id="KW-0963">Cytoplasm</keyword>
<keyword id="KW-0436">Ligase</keyword>
<keyword id="KW-0547">Nucleotide-binding</keyword>
<keyword id="KW-0648">Protein biosynthesis</keyword>
<protein>
    <recommendedName>
        <fullName evidence="1">Leucine--tRNA ligase</fullName>
        <ecNumber evidence="1">6.1.1.4</ecNumber>
    </recommendedName>
    <alternativeName>
        <fullName evidence="1">Leucyl-tRNA synthetase</fullName>
        <shortName evidence="1">LeuRS</shortName>
    </alternativeName>
</protein>
<name>SYL_PSYCK</name>
<proteinExistence type="inferred from homology"/>
<sequence length="919" mass="103257">MLWHYKISPHLSVITDSEPTMTNAVTAETANTNHTNNASSDKTQYQPQLIEAQQQAKWATDKRFEVSNEPSDKPSRYMLSMFPYPSGKLHMGHVRNYTISDVLSRYYRLKGYEVMQPMGWDGFGLPAENAAIANQTPPAKWTFENIDSMRAQLKLLGLSIDWSREFATCSPEYYQWEQWLFLQLYKKGLVYKKLATVNWDPVDNTVLANEQVIDGKGWRSGAMVEKRDIPMYYFNITDYADELLDDLDQLEGHWPSEVITMQRNWIGRSSGMEVHFPYELAGQSNSLDVFTTRPDTLMGVTYVAVAAEHPLAQYASENNKAIADFCALCKKGSVAEADLAKAEKIGMDTGLTVTHPLTGEEVPVWVANYVLMSYGSGAVMAVPAHDERDYEFATKYNLPIKQVIDIPAGYFDDVEEGNENCAYTERNTLVNSGEFDGMDFEQAFEAMLAKLEPQELAKKKIQYRLRDWGVSRQRYWGCPIPMVNCEHCGTVPVEEQDLPVVLPTDVVPDGRGNPLKNIPEFVNTTCPKCGNPAERETDTFDTFVESSWYYARFASPHDTTNMVNKSAANKWLPVDQYIGGVEHAVMHLLYARFFHKLMRDENLVSGDEPFANLMTQGMVLAGTFYRVNADGSTTYYFTKDIDIDFNERGQPIKAILKSDGQPVTIGKIEKMSKSKNNGVDPQITIDKYGADTVRLYTLFTAPADQTLEWSDDALKGPYNFVKKVWRIASEHIQALTDANLSLESLNSDALNTDSLSKEAKALRRKTHETIGKIDSDLGKRLALNTPVSSLMELANELSNFKASSEQELQVQHEALTDLLIMLSVYAPHIGEYLLEQLGLDTVTLNYPMVDESALVQDMITMVIQVNGKMRGKMDVAPNSDPEQLKAQARAIEGVAKFLTGEIKKEIVVPNKLVNIVVAG</sequence>
<gene>
    <name evidence="1" type="primary">leuS</name>
    <name type="ordered locus">Pcryo_0566</name>
</gene>
<dbReference type="EC" id="6.1.1.4" evidence="1"/>
<dbReference type="EMBL" id="CP000323">
    <property type="protein sequence ID" value="ABE74349.1"/>
    <property type="status" value="ALT_INIT"/>
    <property type="molecule type" value="Genomic_DNA"/>
</dbReference>
<dbReference type="SMR" id="Q1QDA4"/>
<dbReference type="STRING" id="335284.Pcryo_0566"/>
<dbReference type="KEGG" id="pcr:Pcryo_0566"/>
<dbReference type="eggNOG" id="COG0495">
    <property type="taxonomic scope" value="Bacteria"/>
</dbReference>
<dbReference type="HOGENOM" id="CLU_004427_0_0_6"/>
<dbReference type="Proteomes" id="UP000002425">
    <property type="component" value="Chromosome"/>
</dbReference>
<dbReference type="GO" id="GO:0005829">
    <property type="term" value="C:cytosol"/>
    <property type="evidence" value="ECO:0007669"/>
    <property type="project" value="TreeGrafter"/>
</dbReference>
<dbReference type="GO" id="GO:0002161">
    <property type="term" value="F:aminoacyl-tRNA deacylase activity"/>
    <property type="evidence" value="ECO:0007669"/>
    <property type="project" value="InterPro"/>
</dbReference>
<dbReference type="GO" id="GO:0005524">
    <property type="term" value="F:ATP binding"/>
    <property type="evidence" value="ECO:0007669"/>
    <property type="project" value="UniProtKB-UniRule"/>
</dbReference>
<dbReference type="GO" id="GO:0004823">
    <property type="term" value="F:leucine-tRNA ligase activity"/>
    <property type="evidence" value="ECO:0007669"/>
    <property type="project" value="UniProtKB-UniRule"/>
</dbReference>
<dbReference type="GO" id="GO:0006429">
    <property type="term" value="P:leucyl-tRNA aminoacylation"/>
    <property type="evidence" value="ECO:0007669"/>
    <property type="project" value="UniProtKB-UniRule"/>
</dbReference>
<dbReference type="CDD" id="cd07958">
    <property type="entry name" value="Anticodon_Ia_Leu_BEm"/>
    <property type="match status" value="1"/>
</dbReference>
<dbReference type="CDD" id="cd00812">
    <property type="entry name" value="LeuRS_core"/>
    <property type="match status" value="1"/>
</dbReference>
<dbReference type="FunFam" id="1.10.730.10:FF:000002">
    <property type="entry name" value="Leucine--tRNA ligase"/>
    <property type="match status" value="1"/>
</dbReference>
<dbReference type="FunFam" id="2.20.28.290:FF:000001">
    <property type="entry name" value="Leucine--tRNA ligase"/>
    <property type="match status" value="1"/>
</dbReference>
<dbReference type="FunFam" id="3.40.50.620:FF:000003">
    <property type="entry name" value="Leucine--tRNA ligase"/>
    <property type="match status" value="1"/>
</dbReference>
<dbReference type="FunFam" id="3.40.50.620:FF:000124">
    <property type="entry name" value="Leucine--tRNA ligase"/>
    <property type="match status" value="1"/>
</dbReference>
<dbReference type="FunFam" id="3.90.740.10:FF:000012">
    <property type="entry name" value="Leucine--tRNA ligase"/>
    <property type="match status" value="1"/>
</dbReference>
<dbReference type="Gene3D" id="2.20.28.290">
    <property type="match status" value="1"/>
</dbReference>
<dbReference type="Gene3D" id="3.10.20.590">
    <property type="match status" value="1"/>
</dbReference>
<dbReference type="Gene3D" id="3.40.50.620">
    <property type="entry name" value="HUPs"/>
    <property type="match status" value="2"/>
</dbReference>
<dbReference type="Gene3D" id="1.10.730.10">
    <property type="entry name" value="Isoleucyl-tRNA Synthetase, Domain 1"/>
    <property type="match status" value="1"/>
</dbReference>
<dbReference type="HAMAP" id="MF_00049_B">
    <property type="entry name" value="Leu_tRNA_synth_B"/>
    <property type="match status" value="1"/>
</dbReference>
<dbReference type="InterPro" id="IPR001412">
    <property type="entry name" value="aa-tRNA-synth_I_CS"/>
</dbReference>
<dbReference type="InterPro" id="IPR002300">
    <property type="entry name" value="aa-tRNA-synth_Ia"/>
</dbReference>
<dbReference type="InterPro" id="IPR002302">
    <property type="entry name" value="Leu-tRNA-ligase"/>
</dbReference>
<dbReference type="InterPro" id="IPR025709">
    <property type="entry name" value="Leu_tRNA-synth_edit"/>
</dbReference>
<dbReference type="InterPro" id="IPR013155">
    <property type="entry name" value="M/V/L/I-tRNA-synth_anticd-bd"/>
</dbReference>
<dbReference type="InterPro" id="IPR015413">
    <property type="entry name" value="Methionyl/Leucyl_tRNA_Synth"/>
</dbReference>
<dbReference type="InterPro" id="IPR014729">
    <property type="entry name" value="Rossmann-like_a/b/a_fold"/>
</dbReference>
<dbReference type="InterPro" id="IPR009080">
    <property type="entry name" value="tRNAsynth_Ia_anticodon-bd"/>
</dbReference>
<dbReference type="InterPro" id="IPR009008">
    <property type="entry name" value="Val/Leu/Ile-tRNA-synth_edit"/>
</dbReference>
<dbReference type="NCBIfam" id="TIGR00396">
    <property type="entry name" value="leuS_bact"/>
    <property type="match status" value="1"/>
</dbReference>
<dbReference type="PANTHER" id="PTHR43740:SF2">
    <property type="entry name" value="LEUCINE--TRNA LIGASE, MITOCHONDRIAL"/>
    <property type="match status" value="1"/>
</dbReference>
<dbReference type="PANTHER" id="PTHR43740">
    <property type="entry name" value="LEUCYL-TRNA SYNTHETASE"/>
    <property type="match status" value="1"/>
</dbReference>
<dbReference type="Pfam" id="PF08264">
    <property type="entry name" value="Anticodon_1"/>
    <property type="match status" value="1"/>
</dbReference>
<dbReference type="Pfam" id="PF00133">
    <property type="entry name" value="tRNA-synt_1"/>
    <property type="match status" value="1"/>
</dbReference>
<dbReference type="Pfam" id="PF13603">
    <property type="entry name" value="tRNA-synt_1_2"/>
    <property type="match status" value="1"/>
</dbReference>
<dbReference type="Pfam" id="PF09334">
    <property type="entry name" value="tRNA-synt_1g"/>
    <property type="match status" value="1"/>
</dbReference>
<dbReference type="PRINTS" id="PR00985">
    <property type="entry name" value="TRNASYNTHLEU"/>
</dbReference>
<dbReference type="SUPFAM" id="SSF47323">
    <property type="entry name" value="Anticodon-binding domain of a subclass of class I aminoacyl-tRNA synthetases"/>
    <property type="match status" value="1"/>
</dbReference>
<dbReference type="SUPFAM" id="SSF52374">
    <property type="entry name" value="Nucleotidylyl transferase"/>
    <property type="match status" value="1"/>
</dbReference>
<dbReference type="SUPFAM" id="SSF50677">
    <property type="entry name" value="ValRS/IleRS/LeuRS editing domain"/>
    <property type="match status" value="1"/>
</dbReference>
<dbReference type="PROSITE" id="PS00178">
    <property type="entry name" value="AA_TRNA_LIGASE_I"/>
    <property type="match status" value="1"/>
</dbReference>
<comment type="catalytic activity">
    <reaction evidence="1">
        <text>tRNA(Leu) + L-leucine + ATP = L-leucyl-tRNA(Leu) + AMP + diphosphate</text>
        <dbReference type="Rhea" id="RHEA:11688"/>
        <dbReference type="Rhea" id="RHEA-COMP:9613"/>
        <dbReference type="Rhea" id="RHEA-COMP:9622"/>
        <dbReference type="ChEBI" id="CHEBI:30616"/>
        <dbReference type="ChEBI" id="CHEBI:33019"/>
        <dbReference type="ChEBI" id="CHEBI:57427"/>
        <dbReference type="ChEBI" id="CHEBI:78442"/>
        <dbReference type="ChEBI" id="CHEBI:78494"/>
        <dbReference type="ChEBI" id="CHEBI:456215"/>
        <dbReference type="EC" id="6.1.1.4"/>
    </reaction>
</comment>
<comment type="subcellular location">
    <subcellularLocation>
        <location evidence="1">Cytoplasm</location>
    </subcellularLocation>
</comment>
<comment type="similarity">
    <text evidence="1">Belongs to the class-I aminoacyl-tRNA synthetase family.</text>
</comment>
<comment type="sequence caution" evidence="2">
    <conflict type="erroneous initiation">
        <sequence resource="EMBL-CDS" id="ABE74349"/>
    </conflict>
</comment>
<feature type="chain" id="PRO_0000334798" description="Leucine--tRNA ligase">
    <location>
        <begin position="1"/>
        <end position="919"/>
    </location>
</feature>
<feature type="short sequence motif" description="'HIGH' region">
    <location>
        <begin position="83"/>
        <end position="93"/>
    </location>
</feature>
<feature type="short sequence motif" description="'KMSKS' region">
    <location>
        <begin position="670"/>
        <end position="674"/>
    </location>
</feature>
<feature type="binding site" evidence="1">
    <location>
        <position position="673"/>
    </location>
    <ligand>
        <name>ATP</name>
        <dbReference type="ChEBI" id="CHEBI:30616"/>
    </ligand>
</feature>
<evidence type="ECO:0000255" key="1">
    <source>
        <dbReference type="HAMAP-Rule" id="MF_00049"/>
    </source>
</evidence>
<evidence type="ECO:0000305" key="2"/>
<organism>
    <name type="scientific">Psychrobacter cryohalolentis (strain ATCC BAA-1226 / DSM 17306 / VKM B-2378 / K5)</name>
    <dbReference type="NCBI Taxonomy" id="335284"/>
    <lineage>
        <taxon>Bacteria</taxon>
        <taxon>Pseudomonadati</taxon>
        <taxon>Pseudomonadota</taxon>
        <taxon>Gammaproteobacteria</taxon>
        <taxon>Moraxellales</taxon>
        <taxon>Moraxellaceae</taxon>
        <taxon>Psychrobacter</taxon>
    </lineage>
</organism>